<protein>
    <recommendedName>
        <fullName>DNA-binding protein HU-beta</fullName>
    </recommendedName>
    <alternativeName>
        <fullName>HU-1</fullName>
    </alternativeName>
    <alternativeName>
        <fullName>NS1</fullName>
    </alternativeName>
</protein>
<accession>P52681</accession>
<sequence>MNKSQLIDKIAAGADISKAAAGRALDAVIASVTDSLKAGDDVALVGFGSFTVRERSARTGRNPQTGKEIKIAARKVPAFRAGKALKDAVN</sequence>
<proteinExistence type="inferred from homology"/>
<evidence type="ECO:0000250" key="1"/>
<evidence type="ECO:0000305" key="2"/>
<keyword id="KW-0226">DNA condensation</keyword>
<keyword id="KW-0238">DNA-binding</keyword>
<reference key="1">
    <citation type="journal article" date="1996" name="J. Bacteriol.">
        <title>Serratia marcescens contains a heterodimeric HU protein like Escherichia coli and Salmonella typhimurium.</title>
        <authorList>
            <person name="Oberto J."/>
            <person name="Rouviere-Yaniv J."/>
        </authorList>
    </citation>
    <scope>NUCLEOTIDE SEQUENCE [GENOMIC DNA]</scope>
    <source>
        <strain>SM369</strain>
    </source>
</reference>
<feature type="chain" id="PRO_0000104973" description="DNA-binding protein HU-beta">
    <location>
        <begin position="1"/>
        <end position="90"/>
    </location>
</feature>
<comment type="function">
    <text evidence="1">Histone-like DNA-binding protein which is capable of wrapping DNA to stabilize it, and thus to prevent its denaturation under extreme environmental conditions.</text>
</comment>
<comment type="subunit">
    <text>Heterodimer of an alpha and a beta chain.</text>
</comment>
<comment type="similarity">
    <text evidence="2">Belongs to the bacterial histone-like protein family.</text>
</comment>
<dbReference type="EMBL" id="U25150">
    <property type="protein sequence ID" value="AAA65988.1"/>
    <property type="molecule type" value="Genomic_DNA"/>
</dbReference>
<dbReference type="SMR" id="P52681"/>
<dbReference type="STRING" id="273526.SMDB11_0345"/>
<dbReference type="GO" id="GO:0005829">
    <property type="term" value="C:cytosol"/>
    <property type="evidence" value="ECO:0007669"/>
    <property type="project" value="TreeGrafter"/>
</dbReference>
<dbReference type="GO" id="GO:0003677">
    <property type="term" value="F:DNA binding"/>
    <property type="evidence" value="ECO:0007669"/>
    <property type="project" value="UniProtKB-KW"/>
</dbReference>
<dbReference type="GO" id="GO:0030527">
    <property type="term" value="F:structural constituent of chromatin"/>
    <property type="evidence" value="ECO:0007669"/>
    <property type="project" value="InterPro"/>
</dbReference>
<dbReference type="GO" id="GO:0030261">
    <property type="term" value="P:chromosome condensation"/>
    <property type="evidence" value="ECO:0007669"/>
    <property type="project" value="UniProtKB-KW"/>
</dbReference>
<dbReference type="CDD" id="cd13831">
    <property type="entry name" value="HU"/>
    <property type="match status" value="1"/>
</dbReference>
<dbReference type="FunFam" id="4.10.520.10:FF:000001">
    <property type="entry name" value="DNA-binding protein HU"/>
    <property type="match status" value="1"/>
</dbReference>
<dbReference type="Gene3D" id="4.10.520.10">
    <property type="entry name" value="IHF-like DNA-binding proteins"/>
    <property type="match status" value="1"/>
</dbReference>
<dbReference type="InterPro" id="IPR000119">
    <property type="entry name" value="Hist_DNA-bd"/>
</dbReference>
<dbReference type="InterPro" id="IPR020816">
    <property type="entry name" value="Histone-like_DNA-bd_CS"/>
</dbReference>
<dbReference type="InterPro" id="IPR010992">
    <property type="entry name" value="IHF-like_DNA-bd_dom_sf"/>
</dbReference>
<dbReference type="NCBIfam" id="NF007945">
    <property type="entry name" value="PRK10664.1"/>
    <property type="match status" value="1"/>
</dbReference>
<dbReference type="PANTHER" id="PTHR33175">
    <property type="entry name" value="DNA-BINDING PROTEIN HU"/>
    <property type="match status" value="1"/>
</dbReference>
<dbReference type="PANTHER" id="PTHR33175:SF3">
    <property type="entry name" value="DNA-BINDING PROTEIN HU-BETA"/>
    <property type="match status" value="1"/>
</dbReference>
<dbReference type="Pfam" id="PF00216">
    <property type="entry name" value="Bac_DNA_binding"/>
    <property type="match status" value="1"/>
</dbReference>
<dbReference type="PRINTS" id="PR01727">
    <property type="entry name" value="DNABINDINGHU"/>
</dbReference>
<dbReference type="SMART" id="SM00411">
    <property type="entry name" value="BHL"/>
    <property type="match status" value="1"/>
</dbReference>
<dbReference type="SUPFAM" id="SSF47729">
    <property type="entry name" value="IHF-like DNA-binding proteins"/>
    <property type="match status" value="1"/>
</dbReference>
<dbReference type="PROSITE" id="PS00045">
    <property type="entry name" value="HISTONE_LIKE"/>
    <property type="match status" value="1"/>
</dbReference>
<gene>
    <name type="primary">hupB</name>
</gene>
<name>DBHB_SERMA</name>
<organism>
    <name type="scientific">Serratia marcescens</name>
    <dbReference type="NCBI Taxonomy" id="615"/>
    <lineage>
        <taxon>Bacteria</taxon>
        <taxon>Pseudomonadati</taxon>
        <taxon>Pseudomonadota</taxon>
        <taxon>Gammaproteobacteria</taxon>
        <taxon>Enterobacterales</taxon>
        <taxon>Yersiniaceae</taxon>
        <taxon>Serratia</taxon>
    </lineage>
</organism>